<evidence type="ECO:0000250" key="1"/>
<evidence type="ECO:0000256" key="2">
    <source>
        <dbReference type="SAM" id="MobiDB-lite"/>
    </source>
</evidence>
<evidence type="ECO:0000305" key="3"/>
<dbReference type="EMBL" id="CR380957">
    <property type="protein sequence ID" value="CAG61233.1"/>
    <property type="molecule type" value="Genomic_DNA"/>
</dbReference>
<dbReference type="RefSeq" id="XP_448272.1">
    <property type="nucleotide sequence ID" value="XM_448272.1"/>
</dbReference>
<dbReference type="SMR" id="Q6FNC2"/>
<dbReference type="FunCoup" id="Q6FNC2">
    <property type="interactions" value="290"/>
</dbReference>
<dbReference type="STRING" id="284593.Q6FNC2"/>
<dbReference type="EnsemblFungi" id="CAGL0K01089g-T">
    <property type="protein sequence ID" value="CAGL0K01089g-T-p1"/>
    <property type="gene ID" value="CAGL0K01089g"/>
</dbReference>
<dbReference type="KEGG" id="cgr:2890156"/>
<dbReference type="CGD" id="CAL0134683">
    <property type="gene designation" value="CAGL0K01089g"/>
</dbReference>
<dbReference type="VEuPathDB" id="FungiDB:CAGL0K01089g"/>
<dbReference type="eggNOG" id="ENOG502S2IS">
    <property type="taxonomic scope" value="Eukaryota"/>
</dbReference>
<dbReference type="HOGENOM" id="CLU_1372424_0_0_1"/>
<dbReference type="InParanoid" id="Q6FNC2"/>
<dbReference type="OMA" id="PKAYLHQ"/>
<dbReference type="Proteomes" id="UP000002428">
    <property type="component" value="Chromosome K"/>
</dbReference>
<dbReference type="GO" id="GO:0030686">
    <property type="term" value="C:90S preribosome"/>
    <property type="evidence" value="ECO:0007669"/>
    <property type="project" value="EnsemblFungi"/>
</dbReference>
<dbReference type="GO" id="GO:0005730">
    <property type="term" value="C:nucleolus"/>
    <property type="evidence" value="ECO:0007669"/>
    <property type="project" value="UniProtKB-SubCell"/>
</dbReference>
<dbReference type="GO" id="GO:0030688">
    <property type="term" value="C:preribosome, small subunit precursor"/>
    <property type="evidence" value="ECO:0007669"/>
    <property type="project" value="EnsemblFungi"/>
</dbReference>
<dbReference type="GO" id="GO:0032040">
    <property type="term" value="C:small-subunit processome"/>
    <property type="evidence" value="ECO:0007669"/>
    <property type="project" value="EnsemblFungi"/>
</dbReference>
<dbReference type="GO" id="GO:0051880">
    <property type="term" value="F:G-quadruplex DNA binding"/>
    <property type="evidence" value="ECO:0007669"/>
    <property type="project" value="EnsemblFungi"/>
</dbReference>
<dbReference type="GO" id="GO:0000462">
    <property type="term" value="P:maturation of SSU-rRNA from tricistronic rRNA transcript (SSU-rRNA, 5.8S rRNA, LSU-rRNA)"/>
    <property type="evidence" value="ECO:0007669"/>
    <property type="project" value="EnsemblFungi"/>
</dbReference>
<dbReference type="GO" id="GO:0000056">
    <property type="term" value="P:ribosomal small subunit export from nucleus"/>
    <property type="evidence" value="ECO:0007669"/>
    <property type="project" value="EnsemblFungi"/>
</dbReference>
<dbReference type="InterPro" id="IPR028160">
    <property type="entry name" value="Slx9-like"/>
</dbReference>
<dbReference type="Pfam" id="PF15341">
    <property type="entry name" value="SLX9"/>
    <property type="match status" value="1"/>
</dbReference>
<gene>
    <name type="primary">SLX9</name>
    <name type="ordered locus">CAGL0K01089g</name>
</gene>
<comment type="function">
    <text evidence="1">Involved in ribosome biogenesis. Required for normal pre-rRNA processing in internal transcribed spacer 1 (ITS1). May be involved in the movements of the replication forks (By similarity).</text>
</comment>
<comment type="subunit">
    <text evidence="1">Interacts with the 35S, 23S and 20S pre-rRNAs and with the U3 snoRNA.</text>
</comment>
<comment type="subcellular location">
    <subcellularLocation>
        <location evidence="1">Nucleus</location>
        <location evidence="1">Nucleolus</location>
    </subcellularLocation>
</comment>
<comment type="similarity">
    <text evidence="3">Belongs to the SLX9 family.</text>
</comment>
<accession>Q6FNC2</accession>
<proteinExistence type="inferred from homology"/>
<sequence length="210" mass="24277">MVAKKRTKLRDKVSRLNAKESAVEEEVPYTSVLGEDPKAFLHQSKETKKEKQSLKHSSFLDRLREKSSANDFSGISKSAARRRKRKLRDDLKPKMQDLLTSLENDVEVESESGEEEYHDTVEDNHDPEIMEDAIPQRKVTRLVSSKKLKKHEKPSGSIVIKKNAPNIRNQRGAKQLSKQESERFNKVLTNQTFQQNPFGSLRDIIKMQKY</sequence>
<organism>
    <name type="scientific">Candida glabrata (strain ATCC 2001 / BCRC 20586 / JCM 3761 / NBRC 0622 / NRRL Y-65 / CBS 138)</name>
    <name type="common">Yeast</name>
    <name type="synonym">Nakaseomyces glabratus</name>
    <dbReference type="NCBI Taxonomy" id="284593"/>
    <lineage>
        <taxon>Eukaryota</taxon>
        <taxon>Fungi</taxon>
        <taxon>Dikarya</taxon>
        <taxon>Ascomycota</taxon>
        <taxon>Saccharomycotina</taxon>
        <taxon>Saccharomycetes</taxon>
        <taxon>Saccharomycetales</taxon>
        <taxon>Saccharomycetaceae</taxon>
        <taxon>Nakaseomyces</taxon>
    </lineage>
</organism>
<keyword id="KW-0539">Nucleus</keyword>
<keyword id="KW-1185">Reference proteome</keyword>
<keyword id="KW-0690">Ribosome biogenesis</keyword>
<keyword id="KW-0698">rRNA processing</keyword>
<feature type="chain" id="PRO_0000333448" description="Ribosome biogenesis protein SLX9">
    <location>
        <begin position="1"/>
        <end position="210"/>
    </location>
</feature>
<feature type="region of interest" description="Disordered" evidence="2">
    <location>
        <begin position="1"/>
        <end position="127"/>
    </location>
</feature>
<feature type="compositionally biased region" description="Basic and acidic residues" evidence="2">
    <location>
        <begin position="10"/>
        <end position="22"/>
    </location>
</feature>
<feature type="compositionally biased region" description="Basic and acidic residues" evidence="2">
    <location>
        <begin position="35"/>
        <end position="68"/>
    </location>
</feature>
<feature type="compositionally biased region" description="Acidic residues" evidence="2">
    <location>
        <begin position="104"/>
        <end position="117"/>
    </location>
</feature>
<feature type="compositionally biased region" description="Basic and acidic residues" evidence="2">
    <location>
        <begin position="118"/>
        <end position="127"/>
    </location>
</feature>
<name>SLX9_CANGA</name>
<reference key="1">
    <citation type="journal article" date="2004" name="Nature">
        <title>Genome evolution in yeasts.</title>
        <authorList>
            <person name="Dujon B."/>
            <person name="Sherman D."/>
            <person name="Fischer G."/>
            <person name="Durrens P."/>
            <person name="Casaregola S."/>
            <person name="Lafontaine I."/>
            <person name="de Montigny J."/>
            <person name="Marck C."/>
            <person name="Neuveglise C."/>
            <person name="Talla E."/>
            <person name="Goffard N."/>
            <person name="Frangeul L."/>
            <person name="Aigle M."/>
            <person name="Anthouard V."/>
            <person name="Babour A."/>
            <person name="Barbe V."/>
            <person name="Barnay S."/>
            <person name="Blanchin S."/>
            <person name="Beckerich J.-M."/>
            <person name="Beyne E."/>
            <person name="Bleykasten C."/>
            <person name="Boisrame A."/>
            <person name="Boyer J."/>
            <person name="Cattolico L."/>
            <person name="Confanioleri F."/>
            <person name="de Daruvar A."/>
            <person name="Despons L."/>
            <person name="Fabre E."/>
            <person name="Fairhead C."/>
            <person name="Ferry-Dumazet H."/>
            <person name="Groppi A."/>
            <person name="Hantraye F."/>
            <person name="Hennequin C."/>
            <person name="Jauniaux N."/>
            <person name="Joyet P."/>
            <person name="Kachouri R."/>
            <person name="Kerrest A."/>
            <person name="Koszul R."/>
            <person name="Lemaire M."/>
            <person name="Lesur I."/>
            <person name="Ma L."/>
            <person name="Muller H."/>
            <person name="Nicaud J.-M."/>
            <person name="Nikolski M."/>
            <person name="Oztas S."/>
            <person name="Ozier-Kalogeropoulos O."/>
            <person name="Pellenz S."/>
            <person name="Potier S."/>
            <person name="Richard G.-F."/>
            <person name="Straub M.-L."/>
            <person name="Suleau A."/>
            <person name="Swennen D."/>
            <person name="Tekaia F."/>
            <person name="Wesolowski-Louvel M."/>
            <person name="Westhof E."/>
            <person name="Wirth B."/>
            <person name="Zeniou-Meyer M."/>
            <person name="Zivanovic Y."/>
            <person name="Bolotin-Fukuhara M."/>
            <person name="Thierry A."/>
            <person name="Bouchier C."/>
            <person name="Caudron B."/>
            <person name="Scarpelli C."/>
            <person name="Gaillardin C."/>
            <person name="Weissenbach J."/>
            <person name="Wincker P."/>
            <person name="Souciet J.-L."/>
        </authorList>
    </citation>
    <scope>NUCLEOTIDE SEQUENCE [LARGE SCALE GENOMIC DNA]</scope>
    <source>
        <strain>ATCC 2001 / BCRC 20586 / JCM 3761 / NBRC 0622 / NRRL Y-65 / CBS 138</strain>
    </source>
</reference>
<protein>
    <recommendedName>
        <fullName>Ribosome biogenesis protein SLX9</fullName>
    </recommendedName>
</protein>